<organism>
    <name type="scientific">Staphylococcus aureus (strain USA300)</name>
    <dbReference type="NCBI Taxonomy" id="367830"/>
    <lineage>
        <taxon>Bacteria</taxon>
        <taxon>Bacillati</taxon>
        <taxon>Bacillota</taxon>
        <taxon>Bacilli</taxon>
        <taxon>Bacillales</taxon>
        <taxon>Staphylococcaceae</taxon>
        <taxon>Staphylococcus</taxon>
    </lineage>
</organism>
<reference key="1">
    <citation type="journal article" date="2006" name="Lancet">
        <title>Complete genome sequence of USA300, an epidemic clone of community-acquired meticillin-resistant Staphylococcus aureus.</title>
        <authorList>
            <person name="Diep B.A."/>
            <person name="Gill S.R."/>
            <person name="Chang R.F."/>
            <person name="Phan T.H."/>
            <person name="Chen J.H."/>
            <person name="Davidson M.G."/>
            <person name="Lin F."/>
            <person name="Lin J."/>
            <person name="Carleton H.A."/>
            <person name="Mongodin E.F."/>
            <person name="Sensabaugh G.F."/>
            <person name="Perdreau-Remington F."/>
        </authorList>
    </citation>
    <scope>NUCLEOTIDE SEQUENCE [LARGE SCALE GENOMIC DNA]</scope>
    <source>
        <strain>USA300</strain>
    </source>
</reference>
<comment type="function">
    <text evidence="1">Catalyzes the condensation of the acetyl group of acetyl-CoA with 3-methyl-2-oxobutanoate (2-ketoisovalerate) to form 3-carboxy-3-hydroxy-4-methylpentanoate (2-isopropylmalate).</text>
</comment>
<comment type="catalytic activity">
    <reaction evidence="1">
        <text>3-methyl-2-oxobutanoate + acetyl-CoA + H2O = (2S)-2-isopropylmalate + CoA + H(+)</text>
        <dbReference type="Rhea" id="RHEA:21524"/>
        <dbReference type="ChEBI" id="CHEBI:1178"/>
        <dbReference type="ChEBI" id="CHEBI:11851"/>
        <dbReference type="ChEBI" id="CHEBI:15377"/>
        <dbReference type="ChEBI" id="CHEBI:15378"/>
        <dbReference type="ChEBI" id="CHEBI:57287"/>
        <dbReference type="ChEBI" id="CHEBI:57288"/>
        <dbReference type="EC" id="2.3.3.13"/>
    </reaction>
</comment>
<comment type="cofactor">
    <cofactor evidence="1">
        <name>Mn(2+)</name>
        <dbReference type="ChEBI" id="CHEBI:29035"/>
    </cofactor>
</comment>
<comment type="pathway">
    <text evidence="1">Amino-acid biosynthesis; L-leucine biosynthesis; L-leucine from 3-methyl-2-oxobutanoate: step 1/4.</text>
</comment>
<comment type="subunit">
    <text evidence="1">Homodimer.</text>
</comment>
<comment type="subcellular location">
    <subcellularLocation>
        <location evidence="1">Cytoplasm</location>
    </subcellularLocation>
</comment>
<comment type="similarity">
    <text evidence="1">Belongs to the alpha-IPM synthase/homocitrate synthase family. LeuA type 1 subfamily.</text>
</comment>
<sequence length="509" mass="55675">MSSHIQIFDTTLRDGEQTPGVNFTFDERLRIALQLEKWGVDVIEAGFPASSTGSFKSVQAIAQTLTTTAVCGLARCKKSDIDAVYEATKDAAKPVVHVFIATSPIHLEHKLKMSQEDVLASIKEHVTYAKQLFDVVQFSPEDATRTELPFLVKCVQTAVDAGATVINIPDTVGYSYHDEYAHIFKTLTESVTSSNEIIYSAHCHDDLGMAVSNSLAAIEGGARRIEGTVNGIGERAGNAALEEVALALYVRNDHYGAQTALNLEETKKTSDLISRYAGIRVPRNKAIVGQNAFSHESGIHQDGVLKHRETYEIMTPQLVGVSTTELPLGKLSGKHAFSEKLKALGYDIDKEAQIDLFKQFKAIADKKKSVSDRDIHAIIQGSEHEHQALYKLETLQLQYVSSGLQSAVVVVKDKEGHIYQDSSIGTGSIVAIYNAVDRIFQKETELIDYRINSVTEGTDAQAEVHVNLLIEGKTVNGFGIDHDILQASCKAYVEAHAKFAAENVEKVGN</sequence>
<protein>
    <recommendedName>
        <fullName evidence="1">2-isopropylmalate synthase</fullName>
        <ecNumber evidence="1">2.3.3.13</ecNumber>
    </recommendedName>
    <alternativeName>
        <fullName evidence="1">Alpha-IPM synthase</fullName>
    </alternativeName>
    <alternativeName>
        <fullName evidence="1">Alpha-isopropylmalate synthase</fullName>
    </alternativeName>
</protein>
<dbReference type="EC" id="2.3.3.13" evidence="1"/>
<dbReference type="EMBL" id="CP000255">
    <property type="protein sequence ID" value="ABD22326.1"/>
    <property type="molecule type" value="Genomic_DNA"/>
</dbReference>
<dbReference type="RefSeq" id="WP_000094576.1">
    <property type="nucleotide sequence ID" value="NZ_CP027476.1"/>
</dbReference>
<dbReference type="SMR" id="Q2FF67"/>
<dbReference type="KEGG" id="saa:SAUSA300_2010"/>
<dbReference type="HOGENOM" id="CLU_022158_0_1_9"/>
<dbReference type="OMA" id="NTMRMLV"/>
<dbReference type="UniPathway" id="UPA00048">
    <property type="reaction ID" value="UER00070"/>
</dbReference>
<dbReference type="Proteomes" id="UP000001939">
    <property type="component" value="Chromosome"/>
</dbReference>
<dbReference type="GO" id="GO:0005737">
    <property type="term" value="C:cytoplasm"/>
    <property type="evidence" value="ECO:0007669"/>
    <property type="project" value="UniProtKB-SubCell"/>
</dbReference>
<dbReference type="GO" id="GO:0003852">
    <property type="term" value="F:2-isopropylmalate synthase activity"/>
    <property type="evidence" value="ECO:0007669"/>
    <property type="project" value="UniProtKB-UniRule"/>
</dbReference>
<dbReference type="GO" id="GO:0003985">
    <property type="term" value="F:acetyl-CoA C-acetyltransferase activity"/>
    <property type="evidence" value="ECO:0007669"/>
    <property type="project" value="UniProtKB-UniRule"/>
</dbReference>
<dbReference type="GO" id="GO:0030145">
    <property type="term" value="F:manganese ion binding"/>
    <property type="evidence" value="ECO:0007669"/>
    <property type="project" value="UniProtKB-UniRule"/>
</dbReference>
<dbReference type="GO" id="GO:0009098">
    <property type="term" value="P:L-leucine biosynthetic process"/>
    <property type="evidence" value="ECO:0007669"/>
    <property type="project" value="UniProtKB-UniRule"/>
</dbReference>
<dbReference type="CDD" id="cd07940">
    <property type="entry name" value="DRE_TIM_IPMS"/>
    <property type="match status" value="1"/>
</dbReference>
<dbReference type="FunFam" id="1.10.238.260:FF:000001">
    <property type="entry name" value="2-isopropylmalate synthase"/>
    <property type="match status" value="1"/>
</dbReference>
<dbReference type="FunFam" id="3.20.20.70:FF:000010">
    <property type="entry name" value="2-isopropylmalate synthase"/>
    <property type="match status" value="1"/>
</dbReference>
<dbReference type="FunFam" id="3.30.160.270:FF:000003">
    <property type="entry name" value="2-isopropylmalate synthase"/>
    <property type="match status" value="1"/>
</dbReference>
<dbReference type="Gene3D" id="1.10.238.260">
    <property type="match status" value="1"/>
</dbReference>
<dbReference type="Gene3D" id="3.30.160.270">
    <property type="match status" value="1"/>
</dbReference>
<dbReference type="Gene3D" id="3.20.20.70">
    <property type="entry name" value="Aldolase class I"/>
    <property type="match status" value="1"/>
</dbReference>
<dbReference type="HAMAP" id="MF_01025">
    <property type="entry name" value="LeuA_type1"/>
    <property type="match status" value="1"/>
</dbReference>
<dbReference type="InterPro" id="IPR050073">
    <property type="entry name" value="2-IPM_HCS-like"/>
</dbReference>
<dbReference type="InterPro" id="IPR013709">
    <property type="entry name" value="2-isopropylmalate_synth_dimer"/>
</dbReference>
<dbReference type="InterPro" id="IPR013785">
    <property type="entry name" value="Aldolase_TIM"/>
</dbReference>
<dbReference type="InterPro" id="IPR054691">
    <property type="entry name" value="LeuA/HCS_post-cat"/>
</dbReference>
<dbReference type="InterPro" id="IPR036230">
    <property type="entry name" value="LeuA_allosteric_dom_sf"/>
</dbReference>
<dbReference type="InterPro" id="IPR005671">
    <property type="entry name" value="LeuA_bact_synth"/>
</dbReference>
<dbReference type="InterPro" id="IPR000891">
    <property type="entry name" value="PYR_CT"/>
</dbReference>
<dbReference type="NCBIfam" id="TIGR00973">
    <property type="entry name" value="leuA_bact"/>
    <property type="match status" value="1"/>
</dbReference>
<dbReference type="NCBIfam" id="NF002086">
    <property type="entry name" value="PRK00915.1-3"/>
    <property type="match status" value="1"/>
</dbReference>
<dbReference type="NCBIfam" id="NF002088">
    <property type="entry name" value="PRK00915.1-5"/>
    <property type="match status" value="1"/>
</dbReference>
<dbReference type="PANTHER" id="PTHR10277:SF9">
    <property type="entry name" value="2-ISOPROPYLMALATE SYNTHASE 1, CHLOROPLASTIC-RELATED"/>
    <property type="match status" value="1"/>
</dbReference>
<dbReference type="PANTHER" id="PTHR10277">
    <property type="entry name" value="HOMOCITRATE SYNTHASE-RELATED"/>
    <property type="match status" value="1"/>
</dbReference>
<dbReference type="Pfam" id="PF22617">
    <property type="entry name" value="HCS_D2"/>
    <property type="match status" value="1"/>
</dbReference>
<dbReference type="Pfam" id="PF00682">
    <property type="entry name" value="HMGL-like"/>
    <property type="match status" value="1"/>
</dbReference>
<dbReference type="Pfam" id="PF08502">
    <property type="entry name" value="LeuA_dimer"/>
    <property type="match status" value="1"/>
</dbReference>
<dbReference type="SMART" id="SM00917">
    <property type="entry name" value="LeuA_dimer"/>
    <property type="match status" value="1"/>
</dbReference>
<dbReference type="SUPFAM" id="SSF110921">
    <property type="entry name" value="2-isopropylmalate synthase LeuA, allosteric (dimerisation) domain"/>
    <property type="match status" value="1"/>
</dbReference>
<dbReference type="SUPFAM" id="SSF51569">
    <property type="entry name" value="Aldolase"/>
    <property type="match status" value="1"/>
</dbReference>
<dbReference type="PROSITE" id="PS50991">
    <property type="entry name" value="PYR_CT"/>
    <property type="match status" value="1"/>
</dbReference>
<accession>Q2FF67</accession>
<name>LEU1_STAA3</name>
<gene>
    <name evidence="1" type="primary">leuA</name>
    <name type="ordered locus">SAUSA300_2010</name>
</gene>
<feature type="chain" id="PRO_1000149303" description="2-isopropylmalate synthase">
    <location>
        <begin position="1"/>
        <end position="509"/>
    </location>
</feature>
<feature type="domain" description="Pyruvate carboxyltransferase" evidence="1">
    <location>
        <begin position="5"/>
        <end position="267"/>
    </location>
</feature>
<feature type="region of interest" description="Regulatory domain" evidence="1">
    <location>
        <begin position="391"/>
        <end position="509"/>
    </location>
</feature>
<feature type="binding site" evidence="1">
    <location>
        <position position="14"/>
    </location>
    <ligand>
        <name>Mn(2+)</name>
        <dbReference type="ChEBI" id="CHEBI:29035"/>
    </ligand>
</feature>
<feature type="binding site" evidence="1">
    <location>
        <position position="202"/>
    </location>
    <ligand>
        <name>Mn(2+)</name>
        <dbReference type="ChEBI" id="CHEBI:29035"/>
    </ligand>
</feature>
<feature type="binding site" evidence="1">
    <location>
        <position position="204"/>
    </location>
    <ligand>
        <name>Mn(2+)</name>
        <dbReference type="ChEBI" id="CHEBI:29035"/>
    </ligand>
</feature>
<feature type="binding site" evidence="1">
    <location>
        <position position="238"/>
    </location>
    <ligand>
        <name>Mn(2+)</name>
        <dbReference type="ChEBI" id="CHEBI:29035"/>
    </ligand>
</feature>
<evidence type="ECO:0000255" key="1">
    <source>
        <dbReference type="HAMAP-Rule" id="MF_01025"/>
    </source>
</evidence>
<keyword id="KW-0028">Amino-acid biosynthesis</keyword>
<keyword id="KW-0100">Branched-chain amino acid biosynthesis</keyword>
<keyword id="KW-0963">Cytoplasm</keyword>
<keyword id="KW-0432">Leucine biosynthesis</keyword>
<keyword id="KW-0464">Manganese</keyword>
<keyword id="KW-0479">Metal-binding</keyword>
<keyword id="KW-0808">Transferase</keyword>
<proteinExistence type="inferred from homology"/>